<protein>
    <recommendedName>
        <fullName evidence="13">Lysophosphatidylserine lipase ABHD12</fullName>
        <ecNumber evidence="6">3.1.1.-</ecNumber>
    </recommendedName>
    <alternativeName>
        <fullName evidence="13">2-arachidonoylglycerol hydrolase ABHD12</fullName>
    </alternativeName>
    <alternativeName>
        <fullName evidence="13">Abhydrolase domain-containing protein 12</fullName>
    </alternativeName>
    <alternativeName>
        <fullName evidence="13">Monoacylglycerol lipase ABHD12</fullName>
        <ecNumber evidence="4">3.1.1.23</ecNumber>
    </alternativeName>
    <alternativeName>
        <fullName evidence="13">Oxidized phosphatidylserine lipase ABHD12</fullName>
        <ecNumber evidence="10">3.1.-.-</ecNumber>
    </alternativeName>
</protein>
<sequence length="398" mass="45270">MRKRTEPVTLEHERCAASGSSSSGSAAAALDADCSLKQNLRLAGKGTAEPHSASDAGMKRALGRRKSLWFRLRKILLCVLGFYIAIPFLVKLCPGIQAKLIFLNFVRVPYFIDLKKPQDQGLNHTCNYYLQPEDDVTIGVWHTIPSVWWKNAQGKDQMWYEDALASNHAIILYLHGNAGTRGGDHRVELYKVLSSLGYHVVTFDYRGWGDSVGTPSERGMTYDALHVFDWIKARSGDNPVYIWGHSLGTGVATNLVRRLCERETPPDALILESPFTNIREEAKSHPFSVIYRYFPGFDWFFLDPITSSGIKFANDENMKHISCPLLILHAEDDPVVPFHLGRKLYNIAAPSRSFRDFKVQFIPFHSDLGYRHKYIYKSPELPRILREFLGKSEPERQH</sequence>
<accession>Q99LR1</accession>
<accession>A2ANB4</accession>
<accession>Q99M06</accession>
<keyword id="KW-0025">Alternative splicing</keyword>
<keyword id="KW-0256">Endoplasmic reticulum</keyword>
<keyword id="KW-0325">Glycoprotein</keyword>
<keyword id="KW-0378">Hydrolase</keyword>
<keyword id="KW-0443">Lipid metabolism</keyword>
<keyword id="KW-0472">Membrane</keyword>
<keyword id="KW-0496">Mitochondrion</keyword>
<keyword id="KW-1185">Reference proteome</keyword>
<keyword id="KW-0812">Transmembrane</keyword>
<keyword id="KW-1133">Transmembrane helix</keyword>
<evidence type="ECO:0000250" key="1">
    <source>
        <dbReference type="UniProtKB" id="Q8N2K0"/>
    </source>
</evidence>
<evidence type="ECO:0000255" key="2"/>
<evidence type="ECO:0000256" key="3">
    <source>
        <dbReference type="SAM" id="MobiDB-lite"/>
    </source>
</evidence>
<evidence type="ECO:0000269" key="4">
    <source>
    </source>
</evidence>
<evidence type="ECO:0000269" key="5">
    <source>
    </source>
</evidence>
<evidence type="ECO:0000269" key="6">
    <source>
    </source>
</evidence>
<evidence type="ECO:0000269" key="7">
    <source>
    </source>
</evidence>
<evidence type="ECO:0000269" key="8">
    <source>
    </source>
</evidence>
<evidence type="ECO:0000269" key="9">
    <source>
    </source>
</evidence>
<evidence type="ECO:0000269" key="10">
    <source>
    </source>
</evidence>
<evidence type="ECO:0000303" key="11">
    <source>
    </source>
</evidence>
<evidence type="ECO:0000303" key="12">
    <source>
    </source>
</evidence>
<evidence type="ECO:0000305" key="13"/>
<evidence type="ECO:0000305" key="14">
    <source>
    </source>
</evidence>
<evidence type="ECO:0000312" key="15">
    <source>
        <dbReference type="MGI" id="MGI:1923442"/>
    </source>
</evidence>
<proteinExistence type="evidence at protein level"/>
<name>ABD12_MOUSE</name>
<comment type="function">
    <text evidence="4 6 7 8 9 10">Lysophosphatidylserine (LPS) lipase that mediates the hydrolysis of lysophosphatidylserine, a class of signaling lipids that regulates immunological and neurological processes (PubMed:23297193, PubMed:25580854, PubMed:30420694). Represents a major lysophosphatidylserine lipase in the brain, thereby playing a key role in the central nervous system (PubMed:23297193). Also able to hydrolyze oxidized phosphatidylserine; oxidized phosphatidylserine is produced in response to severe inflammatory stress and constitutes a proapoptotic 'eat me' signal (PubMed:30643283). Also has monoacylglycerol (MAG) lipase activity: hydrolyzes 2-arachidonoylglycerol (2-AG), thereby acting as a regulator of endocannabinoid signaling pathways (PubMed:18096503). Has a strong preference for very-long-chain lipid substrates; substrate specificity is likely due to improved catalysis and not improved substrate binding (PubMed:30237167).</text>
</comment>
<comment type="catalytic activity">
    <reaction evidence="6">
        <text>1-(9Z-octadecenoyl)-sn-glycero-3-phospho-L-serine + H2O = sn-glycero-3-phospho-L-serine + (9Z)-octadecenoate + H(+)</text>
        <dbReference type="Rhea" id="RHEA:40499"/>
        <dbReference type="ChEBI" id="CHEBI:15377"/>
        <dbReference type="ChEBI" id="CHEBI:15378"/>
        <dbReference type="ChEBI" id="CHEBI:30823"/>
        <dbReference type="ChEBI" id="CHEBI:64765"/>
        <dbReference type="ChEBI" id="CHEBI:74617"/>
    </reaction>
    <physiologicalReaction direction="left-to-right" evidence="6">
        <dbReference type="Rhea" id="RHEA:40500"/>
    </physiologicalReaction>
</comment>
<comment type="catalytic activity">
    <reaction evidence="6">
        <text>1-(9Z-octadecenoyl)-sn-glycero-3-phospho-(1'-sn-glycerol) + H2O = sn-glycero-3-phospho-(1'-sn-glycerol) + (9Z)-octadecenoate + H(+)</text>
        <dbReference type="Rhea" id="RHEA:44584"/>
        <dbReference type="ChEBI" id="CHEBI:15377"/>
        <dbReference type="ChEBI" id="CHEBI:15378"/>
        <dbReference type="ChEBI" id="CHEBI:30823"/>
        <dbReference type="ChEBI" id="CHEBI:64717"/>
        <dbReference type="ChEBI" id="CHEBI:72828"/>
    </reaction>
    <physiologicalReaction direction="left-to-right" evidence="6">
        <dbReference type="Rhea" id="RHEA:44585"/>
    </physiologicalReaction>
</comment>
<comment type="catalytic activity">
    <reaction evidence="6">
        <text>1-(9Z-octadecenoyl)-sn-glycero-3-phospho-(1D-myo-inositol) + H2O = sn-glycero-3-phospho-1D-myo-inositol + (9Z)-octadecenoate + H(+)</text>
        <dbReference type="Rhea" id="RHEA:44588"/>
        <dbReference type="ChEBI" id="CHEBI:15377"/>
        <dbReference type="ChEBI" id="CHEBI:15378"/>
        <dbReference type="ChEBI" id="CHEBI:30823"/>
        <dbReference type="ChEBI" id="CHEBI:58444"/>
        <dbReference type="ChEBI" id="CHEBI:78762"/>
    </reaction>
    <physiologicalReaction direction="left-to-right" evidence="6">
        <dbReference type="Rhea" id="RHEA:44589"/>
    </physiologicalReaction>
</comment>
<comment type="catalytic activity">
    <reaction evidence="6">
        <text>1-(9Z-octadecenoyl)-sn-glycero-3-phosphoethanolamine + H2O = sn-glycero-3-phosphoethanolamine + (9Z)-octadecenoate + H(+)</text>
        <dbReference type="Rhea" id="RHEA:40895"/>
        <dbReference type="ChEBI" id="CHEBI:15377"/>
        <dbReference type="ChEBI" id="CHEBI:15378"/>
        <dbReference type="ChEBI" id="CHEBI:30823"/>
        <dbReference type="ChEBI" id="CHEBI:74971"/>
        <dbReference type="ChEBI" id="CHEBI:143890"/>
    </reaction>
    <physiologicalReaction direction="left-to-right" evidence="6">
        <dbReference type="Rhea" id="RHEA:40896"/>
    </physiologicalReaction>
</comment>
<comment type="catalytic activity">
    <reaction evidence="6">
        <text>1-(9Z-octadecenoyl)-sn-glycero-3-phosphocholine + H2O = 1-(9Z-octadecenoyl)-sn-glycerol + phosphocholine + H(+)</text>
        <dbReference type="Rhea" id="RHEA:41091"/>
        <dbReference type="ChEBI" id="CHEBI:15377"/>
        <dbReference type="ChEBI" id="CHEBI:15378"/>
        <dbReference type="ChEBI" id="CHEBI:28610"/>
        <dbReference type="ChEBI" id="CHEBI:75757"/>
        <dbReference type="ChEBI" id="CHEBI:295975"/>
    </reaction>
    <physiologicalReaction direction="left-to-right" evidence="6">
        <dbReference type="Rhea" id="RHEA:41092"/>
    </physiologicalReaction>
</comment>
<comment type="catalytic activity">
    <reaction evidence="6">
        <text>2-(9Z-octadecenoyl)-glycerol + H2O = glycerol + (9Z)-octadecenoate + H(+)</text>
        <dbReference type="Rhea" id="RHEA:38491"/>
        <dbReference type="ChEBI" id="CHEBI:15377"/>
        <dbReference type="ChEBI" id="CHEBI:15378"/>
        <dbReference type="ChEBI" id="CHEBI:17754"/>
        <dbReference type="ChEBI" id="CHEBI:30823"/>
        <dbReference type="ChEBI" id="CHEBI:73990"/>
    </reaction>
    <physiologicalReaction direction="left-to-right" evidence="6">
        <dbReference type="Rhea" id="RHEA:38492"/>
    </physiologicalReaction>
</comment>
<comment type="catalytic activity">
    <reaction evidence="6">
        <text>1-hexadecanoyl-sn-glycero-3-phospho-L-serine + H2O = sn-glycero-3-phospho-L-serine + hexadecanoate + H(+)</text>
        <dbReference type="Rhea" id="RHEA:44552"/>
        <dbReference type="ChEBI" id="CHEBI:7896"/>
        <dbReference type="ChEBI" id="CHEBI:15377"/>
        <dbReference type="ChEBI" id="CHEBI:15378"/>
        <dbReference type="ChEBI" id="CHEBI:64765"/>
        <dbReference type="ChEBI" id="CHEBI:75020"/>
    </reaction>
    <physiologicalReaction direction="left-to-right" evidence="6">
        <dbReference type="Rhea" id="RHEA:44553"/>
    </physiologicalReaction>
</comment>
<comment type="catalytic activity">
    <reaction evidence="4">
        <text>2-(5Z,8Z,11Z,14Z-eicosatetraenoyl)-glycerol + H2O = glycerol + (5Z,8Z,11Z,14Z)-eicosatetraenoate + H(+)</text>
        <dbReference type="Rhea" id="RHEA:26132"/>
        <dbReference type="ChEBI" id="CHEBI:15377"/>
        <dbReference type="ChEBI" id="CHEBI:15378"/>
        <dbReference type="ChEBI" id="CHEBI:17754"/>
        <dbReference type="ChEBI" id="CHEBI:32395"/>
        <dbReference type="ChEBI" id="CHEBI:52392"/>
    </reaction>
    <physiologicalReaction direction="left-to-right" evidence="4">
        <dbReference type="Rhea" id="RHEA:26133"/>
    </physiologicalReaction>
</comment>
<comment type="catalytic activity">
    <reaction evidence="4">
        <text>Hydrolyzes glycerol monoesters of long-chain fatty acids.</text>
        <dbReference type="EC" id="3.1.1.23"/>
    </reaction>
</comment>
<comment type="catalytic activity">
    <reaction evidence="1">
        <text>1-decanoylglycerol + H2O = decanoate + glycerol + H(+)</text>
        <dbReference type="Rhea" id="RHEA:44320"/>
        <dbReference type="ChEBI" id="CHEBI:15377"/>
        <dbReference type="ChEBI" id="CHEBI:15378"/>
        <dbReference type="ChEBI" id="CHEBI:17754"/>
        <dbReference type="ChEBI" id="CHEBI:27689"/>
        <dbReference type="ChEBI" id="CHEBI:75547"/>
    </reaction>
</comment>
<comment type="catalytic activity">
    <reaction evidence="1">
        <text>1-dodecanoylglycerol + H2O = dodecanoate + glycerol + H(+)</text>
        <dbReference type="Rhea" id="RHEA:44316"/>
        <dbReference type="ChEBI" id="CHEBI:15377"/>
        <dbReference type="ChEBI" id="CHEBI:15378"/>
        <dbReference type="ChEBI" id="CHEBI:17754"/>
        <dbReference type="ChEBI" id="CHEBI:18262"/>
        <dbReference type="ChEBI" id="CHEBI:75539"/>
    </reaction>
</comment>
<comment type="catalytic activity">
    <reaction evidence="1">
        <text>1-tetradecanoylglycerol + H2O = tetradecanoate + glycerol + H(+)</text>
        <dbReference type="Rhea" id="RHEA:44312"/>
        <dbReference type="ChEBI" id="CHEBI:15377"/>
        <dbReference type="ChEBI" id="CHEBI:15378"/>
        <dbReference type="ChEBI" id="CHEBI:17754"/>
        <dbReference type="ChEBI" id="CHEBI:30807"/>
        <dbReference type="ChEBI" id="CHEBI:75562"/>
    </reaction>
</comment>
<comment type="catalytic activity">
    <reaction evidence="1">
        <text>2-hexadecanoylglycerol + H2O = glycerol + hexadecanoate + H(+)</text>
        <dbReference type="Rhea" id="RHEA:39963"/>
        <dbReference type="ChEBI" id="CHEBI:7896"/>
        <dbReference type="ChEBI" id="CHEBI:15377"/>
        <dbReference type="ChEBI" id="CHEBI:15378"/>
        <dbReference type="ChEBI" id="CHEBI:17754"/>
        <dbReference type="ChEBI" id="CHEBI:75455"/>
    </reaction>
</comment>
<comment type="catalytic activity">
    <reaction evidence="8">
        <text>1-(9Z-octadecenoyl)-glycerol + H2O = glycerol + (9Z)-octadecenoate + H(+)</text>
        <dbReference type="Rhea" id="RHEA:38487"/>
        <dbReference type="ChEBI" id="CHEBI:15377"/>
        <dbReference type="ChEBI" id="CHEBI:15378"/>
        <dbReference type="ChEBI" id="CHEBI:17754"/>
        <dbReference type="ChEBI" id="CHEBI:30823"/>
        <dbReference type="ChEBI" id="CHEBI:75342"/>
    </reaction>
    <physiologicalReaction direction="left-to-right" evidence="8">
        <dbReference type="Rhea" id="RHEA:38488"/>
    </physiologicalReaction>
</comment>
<comment type="catalytic activity">
    <reaction evidence="1">
        <text>2-(9Z,12Z-octadecadienoyl)-glycerol + H2O = (9Z,12Z)-octadecadienoate + glycerol + H(+)</text>
        <dbReference type="Rhea" id="RHEA:44732"/>
        <dbReference type="ChEBI" id="CHEBI:15377"/>
        <dbReference type="ChEBI" id="CHEBI:15378"/>
        <dbReference type="ChEBI" id="CHEBI:17754"/>
        <dbReference type="ChEBI" id="CHEBI:30245"/>
        <dbReference type="ChEBI" id="CHEBI:75457"/>
    </reaction>
</comment>
<comment type="catalytic activity">
    <reaction evidence="8">
        <text>1-(5Z,8Z,11Z,14Z-eicosatetraenoyl)-glycerol + H2O = glycerol + (5Z,8Z,11Z,14Z)-eicosatetraenoate + H(+)</text>
        <dbReference type="Rhea" id="RHEA:44728"/>
        <dbReference type="ChEBI" id="CHEBI:15377"/>
        <dbReference type="ChEBI" id="CHEBI:15378"/>
        <dbReference type="ChEBI" id="CHEBI:17754"/>
        <dbReference type="ChEBI" id="CHEBI:32395"/>
        <dbReference type="ChEBI" id="CHEBI:75612"/>
    </reaction>
    <physiologicalReaction direction="left-to-right" evidence="8">
        <dbReference type="Rhea" id="RHEA:44729"/>
    </physiologicalReaction>
</comment>
<comment type="catalytic activity">
    <reaction evidence="1">
        <text>1-(9Z,12Z-octadecadienoyl)-glycerol + H2O = (9Z,12Z)-octadecadienoate + glycerol + H(+)</text>
        <dbReference type="Rhea" id="RHEA:48428"/>
        <dbReference type="ChEBI" id="CHEBI:15377"/>
        <dbReference type="ChEBI" id="CHEBI:15378"/>
        <dbReference type="ChEBI" id="CHEBI:17754"/>
        <dbReference type="ChEBI" id="CHEBI:30245"/>
        <dbReference type="ChEBI" id="CHEBI:75568"/>
    </reaction>
</comment>
<comment type="catalytic activity">
    <reaction evidence="8">
        <text>1-hexadecanoylglycerol + H2O = glycerol + hexadecanoate + H(+)</text>
        <dbReference type="Rhea" id="RHEA:39959"/>
        <dbReference type="ChEBI" id="CHEBI:7896"/>
        <dbReference type="ChEBI" id="CHEBI:15377"/>
        <dbReference type="ChEBI" id="CHEBI:15378"/>
        <dbReference type="ChEBI" id="CHEBI:17754"/>
        <dbReference type="ChEBI" id="CHEBI:69081"/>
    </reaction>
    <physiologicalReaction direction="left-to-right" evidence="8">
        <dbReference type="Rhea" id="RHEA:39960"/>
    </physiologicalReaction>
</comment>
<comment type="catalytic activity">
    <reaction evidence="8">
        <text>1-octadecanoylglycerol + H2O = octadecanoate + glycerol + H(+)</text>
        <dbReference type="Rhea" id="RHEA:38363"/>
        <dbReference type="ChEBI" id="CHEBI:15377"/>
        <dbReference type="ChEBI" id="CHEBI:15378"/>
        <dbReference type="ChEBI" id="CHEBI:17754"/>
        <dbReference type="ChEBI" id="CHEBI:25629"/>
        <dbReference type="ChEBI" id="CHEBI:75555"/>
    </reaction>
    <physiologicalReaction direction="left-to-right" evidence="8">
        <dbReference type="Rhea" id="RHEA:38364"/>
    </physiologicalReaction>
</comment>
<comment type="catalytic activity">
    <reaction evidence="1">
        <text>1-octadecanoyl-2-(9,10-epoxyoctadecanoyl)-sn-glycero-3-phospho-L-serine + H2O = 9,10-epoxyoctadecanoate + 1-octadecanoyl-sn-glycero-3-phosphoserine + H(+)</text>
        <dbReference type="Rhea" id="RHEA:59364"/>
        <dbReference type="ChEBI" id="CHEBI:15377"/>
        <dbReference type="ChEBI" id="CHEBI:15378"/>
        <dbReference type="ChEBI" id="CHEBI:84467"/>
        <dbReference type="ChEBI" id="CHEBI:85195"/>
        <dbReference type="ChEBI" id="CHEBI:143087"/>
    </reaction>
</comment>
<comment type="catalytic activity">
    <reaction evidence="1">
        <text>1-octadecanoyl-2-(10-hydroxyoctadecanoyl)-sn-glycero-3-phospho-L-serine + H2O = 1-octadecanoyl-sn-glycero-3-phosphoserine + 10-hydroxyoctadecanoate + H(+)</text>
        <dbReference type="Rhea" id="RHEA:59368"/>
        <dbReference type="ChEBI" id="CHEBI:15377"/>
        <dbReference type="ChEBI" id="CHEBI:15378"/>
        <dbReference type="ChEBI" id="CHEBI:84467"/>
        <dbReference type="ChEBI" id="CHEBI:143088"/>
        <dbReference type="ChEBI" id="CHEBI:143089"/>
    </reaction>
</comment>
<comment type="catalytic activity">
    <reaction evidence="1">
        <text>1-hexadecanoyl-2-(10-hydroxyoctadecanoyl)-sn-glycero-3-phospho-L-serine + H2O = 10-hydroxyoctadecanoate + 1-hexadecanoyl-sn-glycero-3-phospho-L-serine + H(+)</text>
        <dbReference type="Rhea" id="RHEA:59372"/>
        <dbReference type="ChEBI" id="CHEBI:15377"/>
        <dbReference type="ChEBI" id="CHEBI:15378"/>
        <dbReference type="ChEBI" id="CHEBI:75020"/>
        <dbReference type="ChEBI" id="CHEBI:143089"/>
        <dbReference type="ChEBI" id="CHEBI:143094"/>
    </reaction>
</comment>
<comment type="activity regulation">
    <text evidence="9">Selectively inhibited by DO264 (N-3-pyridyl-N'-(1-[3-chloro-4-{2-chloro-4-(trifluoromethoxy)phenoxy}pyridine-2-yl]piperidin-4-yl)thiourea).</text>
</comment>
<comment type="subcellular location">
    <subcellularLocation>
        <location evidence="8">Endoplasmic reticulum membrane</location>
        <topology evidence="2">Single-pass membrane protein</topology>
    </subcellularLocation>
    <subcellularLocation>
        <location evidence="5">Mitochondrion</location>
    </subcellularLocation>
</comment>
<comment type="alternative products">
    <event type="alternative splicing"/>
    <isoform>
        <id>Q99LR1-1</id>
        <name>1</name>
        <sequence type="displayed"/>
    </isoform>
    <isoform>
        <id>Q99LR1-2</id>
        <name>2</name>
        <sequence type="described" ref="VSP_057493"/>
    </isoform>
</comment>
<comment type="PTM">
    <text evidence="4">Glycosylated.</text>
</comment>
<comment type="disruption phenotype">
    <text evidence="6 9 10">Mice are viable and were born at the expected Mendelian frequency (PubMed:23297193). Young mice (less than 6 months old) are mostly normal in their behavior; however, as these animals age, they develop an array of phenotypes, including defective auditory and motor behavior, with concomitant cellular pathology indicative of a neuroinflammatory response (PubMed:23297193). Mice show heightened immunological responses (PubMed:30420694). Metabolomic characterization of brain tissue show striking elevations in a series of lysophosphatidylserine (LPS) lipids that occur before the onset of neuroinflammatory and behavioral defects (PubMed:23297193). Brain tissues accumulate oxidized phosphatidylserine lipids in response to severe inflammatory stress (PubMed:30643283).</text>
</comment>
<comment type="similarity">
    <text evidence="13">Belongs to the serine esterase family.</text>
</comment>
<comment type="sequence caution" evidence="13">
    <conflict type="erroneous initiation">
        <sequence resource="EMBL-CDS" id="AAH02138"/>
    </conflict>
    <text>Extended N-terminus.</text>
</comment>
<dbReference type="EC" id="3.1.1.-" evidence="6"/>
<dbReference type="EC" id="3.1.1.23" evidence="4"/>
<dbReference type="EC" id="3.1.-.-" evidence="10"/>
<dbReference type="EMBL" id="AL808125">
    <property type="status" value="NOT_ANNOTATED_CDS"/>
    <property type="molecule type" value="Genomic_DNA"/>
</dbReference>
<dbReference type="EMBL" id="AL954712">
    <property type="status" value="NOT_ANNOTATED_CDS"/>
    <property type="molecule type" value="Genomic_DNA"/>
</dbReference>
<dbReference type="EMBL" id="CH466519">
    <property type="protein sequence ID" value="EDL28584.1"/>
    <property type="molecule type" value="Genomic_DNA"/>
</dbReference>
<dbReference type="EMBL" id="BC002138">
    <property type="protein sequence ID" value="AAH02138.1"/>
    <property type="status" value="ALT_INIT"/>
    <property type="molecule type" value="mRNA"/>
</dbReference>
<dbReference type="EMBL" id="BC002263">
    <property type="protein sequence ID" value="AAH02263.1"/>
    <property type="molecule type" value="mRNA"/>
</dbReference>
<dbReference type="CCDS" id="CCDS50742.1">
    <molecule id="Q99LR1-1"/>
</dbReference>
<dbReference type="RefSeq" id="NP_001343479.1">
    <molecule id="Q99LR1-2"/>
    <property type="nucleotide sequence ID" value="NM_001356550.1"/>
</dbReference>
<dbReference type="RefSeq" id="NP_077785.2">
    <molecule id="Q99LR1-1"/>
    <property type="nucleotide sequence ID" value="NM_024465.3"/>
</dbReference>
<dbReference type="SMR" id="Q99LR1"/>
<dbReference type="BioGRID" id="218015">
    <property type="interactions" value="5"/>
</dbReference>
<dbReference type="FunCoup" id="Q99LR1">
    <property type="interactions" value="1535"/>
</dbReference>
<dbReference type="IntAct" id="Q99LR1">
    <property type="interactions" value="1"/>
</dbReference>
<dbReference type="STRING" id="10090.ENSMUSP00000053558"/>
<dbReference type="BindingDB" id="Q99LR1"/>
<dbReference type="ChEMBL" id="CHEMBL5972"/>
<dbReference type="SwissLipids" id="SLP:000001041"/>
<dbReference type="ESTHER" id="mouse-abd12">
    <property type="family name" value="ABHD12-PHARC"/>
</dbReference>
<dbReference type="MEROPS" id="S09.939"/>
<dbReference type="GlyConnect" id="2513">
    <property type="glycosylation" value="3 N-Linked glycans (1 site)"/>
</dbReference>
<dbReference type="GlyCosmos" id="Q99LR1">
    <property type="glycosylation" value="1 site, 3 glycans"/>
</dbReference>
<dbReference type="GlyGen" id="Q99LR1">
    <property type="glycosylation" value="2 sites, 3 N-linked glycans (1 site), 1 O-linked glycan (1 site)"/>
</dbReference>
<dbReference type="iPTMnet" id="Q99LR1"/>
<dbReference type="PhosphoSitePlus" id="Q99LR1"/>
<dbReference type="SwissPalm" id="Q99LR1"/>
<dbReference type="PaxDb" id="10090-ENSMUSP00000053558"/>
<dbReference type="PeptideAtlas" id="Q99LR1"/>
<dbReference type="ProteomicsDB" id="285823">
    <molecule id="Q99LR1-1"/>
</dbReference>
<dbReference type="ProteomicsDB" id="285824">
    <molecule id="Q99LR1-2"/>
</dbReference>
<dbReference type="Pumba" id="Q99LR1"/>
<dbReference type="Antibodypedia" id="10033">
    <property type="antibodies" value="180 antibodies from 28 providers"/>
</dbReference>
<dbReference type="DNASU" id="76192"/>
<dbReference type="Ensembl" id="ENSMUST00000056149.15">
    <molecule id="Q99LR1-1"/>
    <property type="protein sequence ID" value="ENSMUSP00000053558.9"/>
    <property type="gene ID" value="ENSMUSG00000032046.16"/>
</dbReference>
<dbReference type="GeneID" id="76192"/>
<dbReference type="KEGG" id="mmu:76192"/>
<dbReference type="UCSC" id="uc008muo.2">
    <molecule id="Q99LR1-1"/>
    <property type="organism name" value="mouse"/>
</dbReference>
<dbReference type="AGR" id="MGI:1923442"/>
<dbReference type="CTD" id="26090"/>
<dbReference type="MGI" id="MGI:1923442">
    <property type="gene designation" value="Abhd12"/>
</dbReference>
<dbReference type="VEuPathDB" id="HostDB:ENSMUSG00000032046"/>
<dbReference type="eggNOG" id="KOG1552">
    <property type="taxonomic scope" value="Eukaryota"/>
</dbReference>
<dbReference type="GeneTree" id="ENSGT00940000160517"/>
<dbReference type="HOGENOM" id="CLU_029375_1_0_1"/>
<dbReference type="InParanoid" id="Q99LR1"/>
<dbReference type="OMA" id="YELHNCL"/>
<dbReference type="OrthoDB" id="2609at9989"/>
<dbReference type="PhylomeDB" id="Q99LR1"/>
<dbReference type="TreeFam" id="TF315122"/>
<dbReference type="Reactome" id="R-MMU-426048">
    <property type="pathway name" value="Arachidonate production from DAG"/>
</dbReference>
<dbReference type="BioGRID-ORCS" id="76192">
    <property type="hits" value="1 hit in 77 CRISPR screens"/>
</dbReference>
<dbReference type="CD-CODE" id="CE726F99">
    <property type="entry name" value="Postsynaptic density"/>
</dbReference>
<dbReference type="ChiTaRS" id="Abhd12">
    <property type="organism name" value="mouse"/>
</dbReference>
<dbReference type="PRO" id="PR:Q99LR1"/>
<dbReference type="Proteomes" id="UP000000589">
    <property type="component" value="Chromosome 2"/>
</dbReference>
<dbReference type="RNAct" id="Q99LR1">
    <property type="molecule type" value="protein"/>
</dbReference>
<dbReference type="Bgee" id="ENSMUSG00000032046">
    <property type="expression patterns" value="Expressed in urinary bladder urothelium and 249 other cell types or tissues"/>
</dbReference>
<dbReference type="ExpressionAtlas" id="Q99LR1">
    <property type="expression patterns" value="baseline and differential"/>
</dbReference>
<dbReference type="GO" id="GO:0032281">
    <property type="term" value="C:AMPA glutamate receptor complex"/>
    <property type="evidence" value="ECO:0000314"/>
    <property type="project" value="MGI"/>
</dbReference>
<dbReference type="GO" id="GO:0005737">
    <property type="term" value="C:cytoplasm"/>
    <property type="evidence" value="ECO:0000314"/>
    <property type="project" value="UniProtKB"/>
</dbReference>
<dbReference type="GO" id="GO:0032839">
    <property type="term" value="C:dendrite cytoplasm"/>
    <property type="evidence" value="ECO:0000314"/>
    <property type="project" value="UniProtKB"/>
</dbReference>
<dbReference type="GO" id="GO:0005789">
    <property type="term" value="C:endoplasmic reticulum membrane"/>
    <property type="evidence" value="ECO:0000314"/>
    <property type="project" value="UniProtKB"/>
</dbReference>
<dbReference type="GO" id="GO:0016020">
    <property type="term" value="C:membrane"/>
    <property type="evidence" value="ECO:0000314"/>
    <property type="project" value="UniProtKB"/>
</dbReference>
<dbReference type="GO" id="GO:0005739">
    <property type="term" value="C:mitochondrion"/>
    <property type="evidence" value="ECO:0007669"/>
    <property type="project" value="UniProtKB-SubCell"/>
</dbReference>
<dbReference type="GO" id="GO:0004622">
    <property type="term" value="F:lysophospholipase activity"/>
    <property type="evidence" value="ECO:0000314"/>
    <property type="project" value="UniProtKB"/>
</dbReference>
<dbReference type="GO" id="GO:0047372">
    <property type="term" value="F:monoacylglycerol lipase activity"/>
    <property type="evidence" value="ECO:0000314"/>
    <property type="project" value="UniProtKB"/>
</dbReference>
<dbReference type="GO" id="GO:0008474">
    <property type="term" value="F:palmitoyl-(protein) hydrolase activity"/>
    <property type="evidence" value="ECO:0000314"/>
    <property type="project" value="UniProtKB"/>
</dbReference>
<dbReference type="GO" id="GO:0046464">
    <property type="term" value="P:acylglycerol catabolic process"/>
    <property type="evidence" value="ECO:0000314"/>
    <property type="project" value="UniProtKB"/>
</dbReference>
<dbReference type="GO" id="GO:0007628">
    <property type="term" value="P:adult walking behavior"/>
    <property type="evidence" value="ECO:0000315"/>
    <property type="project" value="MGI"/>
</dbReference>
<dbReference type="GO" id="GO:0052651">
    <property type="term" value="P:monoacylglycerol catabolic process"/>
    <property type="evidence" value="ECO:0000314"/>
    <property type="project" value="UniProtKB"/>
</dbReference>
<dbReference type="GO" id="GO:0006660">
    <property type="term" value="P:phosphatidylserine catabolic process"/>
    <property type="evidence" value="ECO:0000315"/>
    <property type="project" value="MGI"/>
</dbReference>
<dbReference type="GO" id="GO:0009395">
    <property type="term" value="P:phospholipid catabolic process"/>
    <property type="evidence" value="ECO:0000314"/>
    <property type="project" value="UniProtKB"/>
</dbReference>
<dbReference type="GO" id="GO:0002084">
    <property type="term" value="P:protein depalmitoylation"/>
    <property type="evidence" value="ECO:0000314"/>
    <property type="project" value="UniProtKB"/>
</dbReference>
<dbReference type="GO" id="GO:0050727">
    <property type="term" value="P:regulation of inflammatory response"/>
    <property type="evidence" value="ECO:0000315"/>
    <property type="project" value="UniProtKB"/>
</dbReference>
<dbReference type="GO" id="GO:0010996">
    <property type="term" value="P:response to auditory stimulus"/>
    <property type="evidence" value="ECO:0000315"/>
    <property type="project" value="MGI"/>
</dbReference>
<dbReference type="FunFam" id="3.40.50.1820:FF:000069">
    <property type="entry name" value="monoacylglycerol lipase ABHD12"/>
    <property type="match status" value="1"/>
</dbReference>
<dbReference type="Gene3D" id="3.40.50.1820">
    <property type="entry name" value="alpha/beta hydrolase"/>
    <property type="match status" value="1"/>
</dbReference>
<dbReference type="InterPro" id="IPR000073">
    <property type="entry name" value="AB_hydrolase_1"/>
</dbReference>
<dbReference type="InterPro" id="IPR029058">
    <property type="entry name" value="AB_hydrolase_fold"/>
</dbReference>
<dbReference type="PANTHER" id="PTHR12277">
    <property type="entry name" value="ALPHA/BETA HYDROLASE DOMAIN-CONTAINING PROTEIN"/>
    <property type="match status" value="1"/>
</dbReference>
<dbReference type="PANTHER" id="PTHR12277:SF61">
    <property type="entry name" value="LYSOPHOSPHATIDYLSERINE LIPASE ABHD12"/>
    <property type="match status" value="1"/>
</dbReference>
<dbReference type="Pfam" id="PF00561">
    <property type="entry name" value="Abhydrolase_1"/>
    <property type="match status" value="1"/>
</dbReference>
<dbReference type="SUPFAM" id="SSF53474">
    <property type="entry name" value="alpha/beta-Hydrolases"/>
    <property type="match status" value="1"/>
</dbReference>
<reference key="1">
    <citation type="journal article" date="2009" name="PLoS Biol.">
        <title>Lineage-specific biology revealed by a finished genome assembly of the mouse.</title>
        <authorList>
            <person name="Church D.M."/>
            <person name="Goodstadt L."/>
            <person name="Hillier L.W."/>
            <person name="Zody M.C."/>
            <person name="Goldstein S."/>
            <person name="She X."/>
            <person name="Bult C.J."/>
            <person name="Agarwala R."/>
            <person name="Cherry J.L."/>
            <person name="DiCuccio M."/>
            <person name="Hlavina W."/>
            <person name="Kapustin Y."/>
            <person name="Meric P."/>
            <person name="Maglott D."/>
            <person name="Birtle Z."/>
            <person name="Marques A.C."/>
            <person name="Graves T."/>
            <person name="Zhou S."/>
            <person name="Teague B."/>
            <person name="Potamousis K."/>
            <person name="Churas C."/>
            <person name="Place M."/>
            <person name="Herschleb J."/>
            <person name="Runnheim R."/>
            <person name="Forrest D."/>
            <person name="Amos-Landgraf J."/>
            <person name="Schwartz D.C."/>
            <person name="Cheng Z."/>
            <person name="Lindblad-Toh K."/>
            <person name="Eichler E.E."/>
            <person name="Ponting C.P."/>
        </authorList>
    </citation>
    <scope>NUCLEOTIDE SEQUENCE [LARGE SCALE GENOMIC DNA]</scope>
    <source>
        <strain>C57BL/6J</strain>
    </source>
</reference>
<reference key="2">
    <citation type="submission" date="2005-07" db="EMBL/GenBank/DDBJ databases">
        <authorList>
            <person name="Mural R.J."/>
            <person name="Adams M.D."/>
            <person name="Myers E.W."/>
            <person name="Smith H.O."/>
            <person name="Venter J.C."/>
        </authorList>
    </citation>
    <scope>NUCLEOTIDE SEQUENCE [LARGE SCALE GENOMIC DNA]</scope>
</reference>
<reference key="3">
    <citation type="journal article" date="2004" name="Genome Res.">
        <title>The status, quality, and expansion of the NIH full-length cDNA project: the Mammalian Gene Collection (MGC).</title>
        <authorList>
            <consortium name="The MGC Project Team"/>
        </authorList>
    </citation>
    <scope>NUCLEOTIDE SEQUENCE [LARGE SCALE MRNA] (ISOFORMS 1 AND 2)</scope>
    <source>
        <tissue>Mammary tumor</tissue>
    </source>
</reference>
<reference key="4">
    <citation type="journal article" date="2007" name="Chem. Biol.">
        <title>A comprehensive profile of brain enzymes that hydrolyze the endocannabinoid 2-arachidonoylglycerol.</title>
        <authorList>
            <person name="Blankman J.L."/>
            <person name="Simon G.M."/>
            <person name="Cravatt B.F."/>
        </authorList>
    </citation>
    <scope>FUNCTION</scope>
    <scope>CATALYTIC ACTIVITY</scope>
    <scope>SUBCELLULAR LOCATION</scope>
    <scope>TOPOLOGY</scope>
    <scope>GLYCOSYLATION</scope>
</reference>
<reference key="5">
    <citation type="journal article" date="2010" name="Cell">
        <title>A tissue-specific atlas of mouse protein phosphorylation and expression.</title>
        <authorList>
            <person name="Huttlin E.L."/>
            <person name="Jedrychowski M.P."/>
            <person name="Elias J.E."/>
            <person name="Goswami T."/>
            <person name="Rad R."/>
            <person name="Beausoleil S.A."/>
            <person name="Villen J."/>
            <person name="Haas W."/>
            <person name="Sowa M.E."/>
            <person name="Gygi S.P."/>
        </authorList>
    </citation>
    <scope>IDENTIFICATION BY MASS SPECTROMETRY [LARGE SCALE ANALYSIS]</scope>
    <source>
        <tissue>Brain</tissue>
        <tissue>Brown adipose tissue</tissue>
        <tissue>Heart</tissue>
        <tissue>Kidney</tissue>
        <tissue>Lung</tissue>
        <tissue>Pancreas</tissue>
        <tissue>Spleen</tissue>
        <tissue>Testis</tissue>
    </source>
</reference>
<reference key="6">
    <citation type="journal article" date="2010" name="Nat. Neurosci.">
        <title>The serine hydrolase ABHD6 controls the accumulation and efficacy of 2-AG at cannabinoid receptors.</title>
        <authorList>
            <person name="Marrs W.R."/>
            <person name="Blankman J.L."/>
            <person name="Horne E.A."/>
            <person name="Thomazeau A."/>
            <person name="Lin Y.H."/>
            <person name="Coy J."/>
            <person name="Bodor A.L."/>
            <person name="Muccioli G.G."/>
            <person name="Hu S.S."/>
            <person name="Woodruff G."/>
            <person name="Fung S."/>
            <person name="Lafourcade M."/>
            <person name="Alexander J.P."/>
            <person name="Long J.Z."/>
            <person name="Li W."/>
            <person name="Xu C."/>
            <person name="Moller T."/>
            <person name="Mackie K."/>
            <person name="Manzoni O.J."/>
            <person name="Cravatt B.F."/>
            <person name="Stella N."/>
        </authorList>
    </citation>
    <scope>SUBCELLULAR LOCATION</scope>
</reference>
<reference key="7">
    <citation type="journal article" date="2013" name="Proc. Natl. Acad. Sci. U.S.A.">
        <title>ABHD12 controls brain lysophosphatidylserine pathways that are deregulated in a murine model of the neurodegenerative disease PHARC.</title>
        <authorList>
            <person name="Blankman J.L."/>
            <person name="Long J.Z."/>
            <person name="Trauger S.A."/>
            <person name="Siuzdak G."/>
            <person name="Cravatt B.F."/>
        </authorList>
    </citation>
    <scope>FUNCTION</scope>
    <scope>CATALYTIC ACTIVITY</scope>
    <scope>DISRUPTION PHENOTYPE</scope>
</reference>
<reference key="8">
    <citation type="journal article" date="2015" name="Nat. Chem. Biol.">
        <title>Immunomodulatory lysophosphatidylserines are regulated by ABHD16A and ABHD12 interplay.</title>
        <authorList>
            <person name="Kamat S.S."/>
            <person name="Camara K."/>
            <person name="Parsons W.H."/>
            <person name="Chen D.H."/>
            <person name="Dix M.M."/>
            <person name="Bird T.D."/>
            <person name="Howell A.R."/>
            <person name="Cravatt B.F."/>
        </authorList>
    </citation>
    <scope>FUNCTION</scope>
</reference>
<reference key="9">
    <citation type="journal article" date="2018" name="J. Biol. Chem.">
        <title>Biochemical characterization of the PHARC-associated serine hydrolase ABHD12 reveals its preference for very-long-chain lipids.</title>
        <authorList>
            <person name="Joshi A."/>
            <person name="Shaikh M."/>
            <person name="Singh S."/>
            <person name="Rajendran A."/>
            <person name="Mhetre A."/>
            <person name="Kamat S.S."/>
        </authorList>
    </citation>
    <scope>FUNCTION</scope>
    <scope>CATALYTIC ACTIVITY</scope>
    <scope>SUBCELLULAR LOCATION</scope>
</reference>
<reference key="10">
    <citation type="journal article" date="2018" name="Nat. Chem. Biol.">
        <title>Selective blockade of the lyso-PS lipase ABHD12 stimulates immune responses in vivo.</title>
        <authorList>
            <person name="Ogasawara D."/>
            <person name="Ichu T.A."/>
            <person name="Vartabedian V.F."/>
            <person name="Benthuysen J."/>
            <person name="Jing H."/>
            <person name="Reed A."/>
            <person name="Ulanovskaya O.A."/>
            <person name="Hulce J.J."/>
            <person name="Roberts A."/>
            <person name="Brown S."/>
            <person name="Rosen H."/>
            <person name="Teijaro J.R."/>
            <person name="Cravatt B.F."/>
        </authorList>
    </citation>
    <scope>FUNCTION</scope>
    <scope>ACTIVITY REGULATION</scope>
    <scope>DISRUPTION PHENOTYPE</scope>
</reference>
<reference key="11">
    <citation type="journal article" date="2019" name="Nat. Chem. Biol.">
        <title>A chemical-genetic screen identifies ABHD12 as an oxidized-phosphatidylserine lipase.</title>
        <authorList>
            <person name="Kelkar D.S."/>
            <person name="Ravikumar G."/>
            <person name="Mehendale N."/>
            <person name="Singh S."/>
            <person name="Joshi A."/>
            <person name="Sharma A.K."/>
            <person name="Mhetre A."/>
            <person name="Rajendran A."/>
            <person name="Chakrapani H."/>
            <person name="Kamat S.S."/>
        </authorList>
    </citation>
    <scope>FUNCTION</scope>
    <scope>DISRUPTION PHENOTYPE</scope>
</reference>
<organism>
    <name type="scientific">Mus musculus</name>
    <name type="common">Mouse</name>
    <dbReference type="NCBI Taxonomy" id="10090"/>
    <lineage>
        <taxon>Eukaryota</taxon>
        <taxon>Metazoa</taxon>
        <taxon>Chordata</taxon>
        <taxon>Craniata</taxon>
        <taxon>Vertebrata</taxon>
        <taxon>Euteleostomi</taxon>
        <taxon>Mammalia</taxon>
        <taxon>Eutheria</taxon>
        <taxon>Euarchontoglires</taxon>
        <taxon>Glires</taxon>
        <taxon>Rodentia</taxon>
        <taxon>Myomorpha</taxon>
        <taxon>Muroidea</taxon>
        <taxon>Muridae</taxon>
        <taxon>Murinae</taxon>
        <taxon>Mus</taxon>
        <taxon>Mus</taxon>
    </lineage>
</organism>
<feature type="chain" id="PRO_0000079414" description="Lysophosphatidylserine lipase ABHD12">
    <location>
        <begin position="1"/>
        <end position="398"/>
    </location>
</feature>
<feature type="topological domain" description="Cytoplasmic" evidence="14">
    <location>
        <begin position="1"/>
        <end position="74"/>
    </location>
</feature>
<feature type="transmembrane region" description="Helical" evidence="4">
    <location>
        <begin position="75"/>
        <end position="95"/>
    </location>
</feature>
<feature type="topological domain" description="Extracellular" evidence="14">
    <location>
        <begin position="96"/>
        <end position="398"/>
    </location>
</feature>
<feature type="region of interest" description="Disordered" evidence="3">
    <location>
        <begin position="1"/>
        <end position="24"/>
    </location>
</feature>
<feature type="compositionally biased region" description="Basic and acidic residues" evidence="3">
    <location>
        <begin position="1"/>
        <end position="15"/>
    </location>
</feature>
<feature type="active site" description="Nucleophile" evidence="1">
    <location>
        <position position="246"/>
    </location>
</feature>
<feature type="active site" description="Charge relay system" evidence="1">
    <location>
        <position position="333"/>
    </location>
</feature>
<feature type="active site" description="Charge relay system" evidence="1">
    <location>
        <position position="372"/>
    </location>
</feature>
<feature type="glycosylation site" description="N-linked (GlcNAc...) asparagine" evidence="2">
    <location>
        <position position="123"/>
    </location>
</feature>
<feature type="splice variant" id="VSP_057493" description="In isoform 2." evidence="11">
    <location>
        <begin position="1"/>
        <end position="219"/>
    </location>
</feature>
<feature type="sequence conflict" description="In Ref. 3; AAH02138." evidence="13" ref="3">
    <original>R</original>
    <variation>W</variation>
    <location>
        <position position="386"/>
    </location>
</feature>
<gene>
    <name evidence="12 15" type="primary">Abhd12</name>
</gene>